<proteinExistence type="inferred from homology"/>
<organism>
    <name type="scientific">Streptococcus pneumoniae (strain ATCC BAA-255 / R6)</name>
    <dbReference type="NCBI Taxonomy" id="171101"/>
    <lineage>
        <taxon>Bacteria</taxon>
        <taxon>Bacillati</taxon>
        <taxon>Bacillota</taxon>
        <taxon>Bacilli</taxon>
        <taxon>Lactobacillales</taxon>
        <taxon>Streptococcaceae</taxon>
        <taxon>Streptococcus</taxon>
    </lineage>
</organism>
<gene>
    <name evidence="1" type="primary">gpmA</name>
    <name type="ordered locus">spr1499</name>
</gene>
<name>GPMA_STRR6</name>
<keyword id="KW-0312">Gluconeogenesis</keyword>
<keyword id="KW-0324">Glycolysis</keyword>
<keyword id="KW-0413">Isomerase</keyword>
<keyword id="KW-1185">Reference proteome</keyword>
<dbReference type="EC" id="5.4.2.11" evidence="1"/>
<dbReference type="EMBL" id="AE007317">
    <property type="protein sequence ID" value="AAL00303.1"/>
    <property type="molecule type" value="Genomic_DNA"/>
</dbReference>
<dbReference type="PIR" id="B98059">
    <property type="entry name" value="B98059"/>
</dbReference>
<dbReference type="RefSeq" id="NP_359092.1">
    <property type="nucleotide sequence ID" value="NC_003098.1"/>
</dbReference>
<dbReference type="RefSeq" id="WP_000240129.1">
    <property type="nucleotide sequence ID" value="NC_003098.1"/>
</dbReference>
<dbReference type="SMR" id="P0A3Y4"/>
<dbReference type="STRING" id="171101.spr1499"/>
<dbReference type="KEGG" id="spr:spr1499"/>
<dbReference type="PATRIC" id="fig|171101.6.peg.1618"/>
<dbReference type="eggNOG" id="COG0588">
    <property type="taxonomic scope" value="Bacteria"/>
</dbReference>
<dbReference type="HOGENOM" id="CLU_033323_1_5_9"/>
<dbReference type="UniPathway" id="UPA00109">
    <property type="reaction ID" value="UER00186"/>
</dbReference>
<dbReference type="Proteomes" id="UP000000586">
    <property type="component" value="Chromosome"/>
</dbReference>
<dbReference type="GO" id="GO:0004619">
    <property type="term" value="F:phosphoglycerate mutase activity"/>
    <property type="evidence" value="ECO:0007669"/>
    <property type="project" value="UniProtKB-EC"/>
</dbReference>
<dbReference type="GO" id="GO:0006094">
    <property type="term" value="P:gluconeogenesis"/>
    <property type="evidence" value="ECO:0007669"/>
    <property type="project" value="UniProtKB-UniRule"/>
</dbReference>
<dbReference type="GO" id="GO:0006096">
    <property type="term" value="P:glycolytic process"/>
    <property type="evidence" value="ECO:0007669"/>
    <property type="project" value="UniProtKB-UniRule"/>
</dbReference>
<dbReference type="CDD" id="cd07067">
    <property type="entry name" value="HP_PGM_like"/>
    <property type="match status" value="1"/>
</dbReference>
<dbReference type="FunFam" id="3.40.50.1240:FF:000003">
    <property type="entry name" value="2,3-bisphosphoglycerate-dependent phosphoglycerate mutase"/>
    <property type="match status" value="1"/>
</dbReference>
<dbReference type="Gene3D" id="3.40.50.1240">
    <property type="entry name" value="Phosphoglycerate mutase-like"/>
    <property type="match status" value="1"/>
</dbReference>
<dbReference type="HAMAP" id="MF_01039">
    <property type="entry name" value="PGAM_GpmA"/>
    <property type="match status" value="1"/>
</dbReference>
<dbReference type="InterPro" id="IPR013078">
    <property type="entry name" value="His_Pase_superF_clade-1"/>
</dbReference>
<dbReference type="InterPro" id="IPR029033">
    <property type="entry name" value="His_PPase_superfam"/>
</dbReference>
<dbReference type="InterPro" id="IPR005952">
    <property type="entry name" value="Phosphogly_mut1"/>
</dbReference>
<dbReference type="NCBIfam" id="TIGR01258">
    <property type="entry name" value="pgm_1"/>
    <property type="match status" value="1"/>
</dbReference>
<dbReference type="NCBIfam" id="NF010713">
    <property type="entry name" value="PRK14115.1"/>
    <property type="match status" value="1"/>
</dbReference>
<dbReference type="NCBIfam" id="NF010715">
    <property type="entry name" value="PRK14117.1"/>
    <property type="match status" value="1"/>
</dbReference>
<dbReference type="PANTHER" id="PTHR11931">
    <property type="entry name" value="PHOSPHOGLYCERATE MUTASE"/>
    <property type="match status" value="1"/>
</dbReference>
<dbReference type="Pfam" id="PF00300">
    <property type="entry name" value="His_Phos_1"/>
    <property type="match status" value="1"/>
</dbReference>
<dbReference type="PIRSF" id="PIRSF000709">
    <property type="entry name" value="6PFK_2-Ptase"/>
    <property type="match status" value="1"/>
</dbReference>
<dbReference type="SMART" id="SM00855">
    <property type="entry name" value="PGAM"/>
    <property type="match status" value="1"/>
</dbReference>
<dbReference type="SUPFAM" id="SSF53254">
    <property type="entry name" value="Phosphoglycerate mutase-like"/>
    <property type="match status" value="1"/>
</dbReference>
<sequence>MVKLVFARHGESEWNKANLFTGWADVDLSEKGTQQAIDAGKLIKEAGIEFDQAYTSVLKRAIKTTNLALEASDQLWVPVEKSWRLNERHYGGLTGKNKAEAAEQFGDEQVHIWRRSYDVLPPNMDRDDEHSAHTDRRYASLDDSVIPDAENLKVTLERALPFWEDKIAPALKDGKNVFVGAHGNSIRALVKHIKGLSDDEIMDVEIPNFPPLVFEFDEKLNVVSEYYLGK</sequence>
<accession>P0A3Y4</accession>
<accession>Q97PG5</accession>
<accession>Q9X9S2</accession>
<reference key="1">
    <citation type="journal article" date="2001" name="J. Bacteriol.">
        <title>Genome of the bacterium Streptococcus pneumoniae strain R6.</title>
        <authorList>
            <person name="Hoskins J."/>
            <person name="Alborn W.E. Jr."/>
            <person name="Arnold J."/>
            <person name="Blaszczak L.C."/>
            <person name="Burgett S."/>
            <person name="DeHoff B.S."/>
            <person name="Estrem S.T."/>
            <person name="Fritz L."/>
            <person name="Fu D.-J."/>
            <person name="Fuller W."/>
            <person name="Geringer C."/>
            <person name="Gilmour R."/>
            <person name="Glass J.S."/>
            <person name="Khoja H."/>
            <person name="Kraft A.R."/>
            <person name="Lagace R.E."/>
            <person name="LeBlanc D.J."/>
            <person name="Lee L.N."/>
            <person name="Lefkowitz E.J."/>
            <person name="Lu J."/>
            <person name="Matsushima P."/>
            <person name="McAhren S.M."/>
            <person name="McHenney M."/>
            <person name="McLeaster K."/>
            <person name="Mundy C.W."/>
            <person name="Nicas T.I."/>
            <person name="Norris F.H."/>
            <person name="O'Gara M."/>
            <person name="Peery R.B."/>
            <person name="Robertson G.T."/>
            <person name="Rockey P."/>
            <person name="Sun P.-M."/>
            <person name="Winkler M.E."/>
            <person name="Yang Y."/>
            <person name="Young-Bellido M."/>
            <person name="Zhao G."/>
            <person name="Zook C.A."/>
            <person name="Baltz R.H."/>
            <person name="Jaskunas S.R."/>
            <person name="Rosteck P.R. Jr."/>
            <person name="Skatrud P.L."/>
            <person name="Glass J.I."/>
        </authorList>
    </citation>
    <scope>NUCLEOTIDE SEQUENCE [LARGE SCALE GENOMIC DNA]</scope>
    <source>
        <strain>ATCC BAA-255 / R6</strain>
    </source>
</reference>
<feature type="chain" id="PRO_0000179926" description="2,3-bisphosphoglycerate-dependent phosphoglycerate mutase">
    <location>
        <begin position="1"/>
        <end position="230"/>
    </location>
</feature>
<feature type="active site" description="Tele-phosphohistidine intermediate" evidence="1">
    <location>
        <position position="9"/>
    </location>
</feature>
<feature type="active site" description="Proton donor/acceptor" evidence="1">
    <location>
        <position position="87"/>
    </location>
</feature>
<feature type="binding site" evidence="1">
    <location>
        <begin position="8"/>
        <end position="15"/>
    </location>
    <ligand>
        <name>substrate</name>
    </ligand>
</feature>
<feature type="binding site" evidence="1">
    <location>
        <begin position="21"/>
        <end position="22"/>
    </location>
    <ligand>
        <name>substrate</name>
    </ligand>
</feature>
<feature type="binding site" evidence="1">
    <location>
        <position position="60"/>
    </location>
    <ligand>
        <name>substrate</name>
    </ligand>
</feature>
<feature type="binding site" evidence="1">
    <location>
        <begin position="87"/>
        <end position="90"/>
    </location>
    <ligand>
        <name>substrate</name>
    </ligand>
</feature>
<feature type="binding site" evidence="1">
    <location>
        <position position="98"/>
    </location>
    <ligand>
        <name>substrate</name>
    </ligand>
</feature>
<feature type="binding site" evidence="1">
    <location>
        <begin position="114"/>
        <end position="115"/>
    </location>
    <ligand>
        <name>substrate</name>
    </ligand>
</feature>
<feature type="binding site" evidence="1">
    <location>
        <begin position="183"/>
        <end position="184"/>
    </location>
    <ligand>
        <name>substrate</name>
    </ligand>
</feature>
<feature type="site" description="Transition state stabilizer" evidence="1">
    <location>
        <position position="182"/>
    </location>
</feature>
<protein>
    <recommendedName>
        <fullName evidence="1">2,3-bisphosphoglycerate-dependent phosphoglycerate mutase</fullName>
        <shortName evidence="1">BPG-dependent PGAM</shortName>
        <shortName evidence="1">PGAM</shortName>
        <shortName evidence="1">Phosphoglyceromutase</shortName>
        <shortName evidence="1">dPGM</shortName>
        <ecNumber evidence="1">5.4.2.11</ecNumber>
    </recommendedName>
</protein>
<comment type="function">
    <text evidence="1">Catalyzes the interconversion of 2-phosphoglycerate and 3-phosphoglycerate.</text>
</comment>
<comment type="catalytic activity">
    <reaction evidence="1">
        <text>(2R)-2-phosphoglycerate = (2R)-3-phosphoglycerate</text>
        <dbReference type="Rhea" id="RHEA:15901"/>
        <dbReference type="ChEBI" id="CHEBI:58272"/>
        <dbReference type="ChEBI" id="CHEBI:58289"/>
        <dbReference type="EC" id="5.4.2.11"/>
    </reaction>
</comment>
<comment type="pathway">
    <text evidence="1">Carbohydrate degradation; glycolysis; pyruvate from D-glyceraldehyde 3-phosphate: step 3/5.</text>
</comment>
<comment type="similarity">
    <text evidence="1">Belongs to the phosphoglycerate mutase family. BPG-dependent PGAM subfamily.</text>
</comment>
<evidence type="ECO:0000255" key="1">
    <source>
        <dbReference type="HAMAP-Rule" id="MF_01039"/>
    </source>
</evidence>